<organism>
    <name type="scientific">Hepatitis B virus genotype E (isolate Cote d'Ivoire/ABI-129/2003)</name>
    <name type="common">HBV-E</name>
    <dbReference type="NCBI Taxonomy" id="489496"/>
    <lineage>
        <taxon>Viruses</taxon>
        <taxon>Riboviria</taxon>
        <taxon>Pararnavirae</taxon>
        <taxon>Artverviricota</taxon>
        <taxon>Revtraviricetes</taxon>
        <taxon>Blubervirales</taxon>
        <taxon>Hepadnaviridae</taxon>
        <taxon>Orthohepadnavirus</taxon>
        <taxon>Hepatitis B virus</taxon>
        <taxon>hepatitis B virus genotype E</taxon>
    </lineage>
</organism>
<gene>
    <name evidence="1" type="primary">X</name>
</gene>
<keyword id="KW-1074">Activation of host NF-kappa-B by virus</keyword>
<keyword id="KW-0010">Activator</keyword>
<keyword id="KW-0053">Apoptosis</keyword>
<keyword id="KW-1035">Host cytoplasm</keyword>
<keyword id="KW-1079">Host G2/M cell cycle arrest by virus</keyword>
<keyword id="KW-1045">Host mitochondrion</keyword>
<keyword id="KW-1048">Host nucleus</keyword>
<keyword id="KW-0945">Host-virus interaction</keyword>
<keyword id="KW-1121">Modulation of host cell cycle by virus</keyword>
<keyword id="KW-0804">Transcription</keyword>
<keyword id="KW-0805">Transcription regulation</keyword>
<reference key="1">
    <citation type="submission" date="2002-09" db="EMBL/GenBank/DDBJ databases">
        <title>Distribution of Hepatitis B Virus (HBV) genotypes among HBV Carriers in Cote d'Ivoire: complete genome sequence and phylogenetic relatedness of HBV genotype E.</title>
        <authorList>
            <person name="Suzuki S."/>
            <person name="Sugauchi F."/>
            <person name="Orito E."/>
            <person name="Kato H."/>
            <person name="Usuda S."/>
            <person name="Siransy L."/>
            <person name="Arita I."/>
            <person name="Sakamoto Y."/>
            <person name="Yoshihara N."/>
            <person name="El-Gohary A."/>
            <person name="Ueda R."/>
            <person name="Mizokami M."/>
        </authorList>
    </citation>
    <scope>NUCLEOTIDE SEQUENCE [GENOMIC DNA]</scope>
</reference>
<reference key="2">
    <citation type="journal article" date="2004" name="J. Virol.">
        <title>The enigmatic X gene of hepatitis B virus.</title>
        <authorList>
            <person name="Bouchard M.J."/>
            <person name="Schneider R.J."/>
        </authorList>
    </citation>
    <scope>REVIEW</scope>
</reference>
<reference key="3">
    <citation type="journal article" date="2006" name="Cancer Sci.">
        <title>Molecular functions and biological roles of hepatitis B virus x protein.</title>
        <authorList>
            <person name="Tang H."/>
            <person name="Oishi N."/>
            <person name="Kaneko S."/>
            <person name="Murakami S."/>
        </authorList>
    </citation>
    <scope>REVIEW</scope>
</reference>
<sequence length="154" mass="16491">MAARLCCQLDPARDVLCLRPVSAESCGRSVSGSLGDLSSPSPSAVPADHGAHLSLRGLPVCAFSSAGPCALRFTSARRMETTVNAHQILPKVLHKRTLGLSAMSTTDLEAYFKACLFKDWEELGEEIRLKIFVLGGCRHKLVCAPAPCNFFTSA</sequence>
<accession>Q80IU8</accession>
<dbReference type="EMBL" id="AB091255">
    <property type="protein sequence ID" value="BAC65102.1"/>
    <property type="molecule type" value="Genomic_DNA"/>
</dbReference>
<dbReference type="Proteomes" id="UP000001387">
    <property type="component" value="Genome"/>
</dbReference>
<dbReference type="GO" id="GO:0033650">
    <property type="term" value="C:host cell mitochondrion"/>
    <property type="evidence" value="ECO:0007669"/>
    <property type="project" value="UniProtKB-SubCell"/>
</dbReference>
<dbReference type="GO" id="GO:0042025">
    <property type="term" value="C:host cell nucleus"/>
    <property type="evidence" value="ECO:0007669"/>
    <property type="project" value="UniProtKB-SubCell"/>
</dbReference>
<dbReference type="GO" id="GO:0006351">
    <property type="term" value="P:DNA-templated transcription"/>
    <property type="evidence" value="ECO:0007669"/>
    <property type="project" value="UniProtKB-UniRule"/>
</dbReference>
<dbReference type="GO" id="GO:0085033">
    <property type="term" value="P:symbiont-mediated activation of host NF-kappaB cascade"/>
    <property type="evidence" value="ECO:0007669"/>
    <property type="project" value="UniProtKB-UniRule"/>
</dbReference>
<dbReference type="GO" id="GO:0039592">
    <property type="term" value="P:symbiont-mediated arrest of host cell cycle during G2/M transition"/>
    <property type="evidence" value="ECO:0007669"/>
    <property type="project" value="UniProtKB-UniRule"/>
</dbReference>
<dbReference type="GO" id="GO:0019079">
    <property type="term" value="P:viral genome replication"/>
    <property type="evidence" value="ECO:0007669"/>
    <property type="project" value="UniProtKB-UniRule"/>
</dbReference>
<dbReference type="HAMAP" id="MF_04074">
    <property type="entry name" value="HBV_X"/>
    <property type="match status" value="1"/>
</dbReference>
<dbReference type="InterPro" id="IPR000236">
    <property type="entry name" value="Transactivation_prot_X"/>
</dbReference>
<dbReference type="Pfam" id="PF00739">
    <property type="entry name" value="X"/>
    <property type="match status" value="1"/>
</dbReference>
<organismHost>
    <name type="scientific">Homo sapiens</name>
    <name type="common">Human</name>
    <dbReference type="NCBI Taxonomy" id="9606"/>
</organismHost>
<organismHost>
    <name type="scientific">Pan troglodytes</name>
    <name type="common">Chimpanzee</name>
    <dbReference type="NCBI Taxonomy" id="9598"/>
</organismHost>
<proteinExistence type="inferred from homology"/>
<protein>
    <recommendedName>
        <fullName evidence="1">Protein X</fullName>
    </recommendedName>
    <alternativeName>
        <fullName evidence="1">HBx</fullName>
    </alternativeName>
    <alternativeName>
        <fullName evidence="1">Peptide X</fullName>
    </alternativeName>
    <alternativeName>
        <fullName evidence="1">pX</fullName>
    </alternativeName>
</protein>
<feature type="chain" id="PRO_0000319915" description="Protein X">
    <location>
        <begin position="1"/>
        <end position="154"/>
    </location>
</feature>
<feature type="region of interest" description="Mitochondrial targeting sequence" evidence="1">
    <location>
        <begin position="68"/>
        <end position="117"/>
    </location>
</feature>
<name>X_HBVE2</name>
<evidence type="ECO:0000255" key="1">
    <source>
        <dbReference type="HAMAP-Rule" id="MF_04074"/>
    </source>
</evidence>
<comment type="function">
    <text evidence="1">Multifunctional protein that plays a role in silencing host antiviral defenses and promoting viral transcription. Does not seem to be essential for HBV infection. May be directly involved in development of cirrhosis and liver cancer (hepatocellular carcinoma). Most of cytosolic activities involve modulation of cytosolic calcium. The effect on apoptosis is controversial depending on the cell types in which the studies have been conducted. May induce apoptosis by localizing in mitochondria and causing loss of mitochondrial membrane potential. May also modulate apoptosis by binding host CFLAR, a key regulator of the death-inducing signaling complex (DISC). Promotes viral transcription by using the host E3 ubiquitin ligase DDB1 to target the SMC5-SMC6 complex to proteasomal degradation. This host complex would otherwise bind to viral episomal DNA, and prevents its transcription. Moderately stimulates transcription of many different viral and cellular transcription elements. Promoters and enhancers stimulated by HBx contain DNA binding sites for NF-kappa-B, AP-1, AP-2, c-EBP, ATF/CREB, or the calcium-activated factor NF-AT.</text>
</comment>
<comment type="subunit">
    <text evidence="1">May form homodimer. May interact with host CEBPA, CFLAR, CREB1, DDB1, E4F1, HBXIP, HSPD1/HSP60, NFKBIA, POLR2E and SMAD4. Interacts with host SMC5-SMC6 complex and induces its degradation. Interacts with host TRPC4AP; leading to prevent ubiquitination of TRPC4AP. Interacts with host PLSCR1; this interaction promotes ubiquitination and degradation of HBx and impairs HBx-mediated cell proliferation.</text>
</comment>
<comment type="subcellular location">
    <subcellularLocation>
        <location evidence="1">Host cytoplasm</location>
    </subcellularLocation>
    <subcellularLocation>
        <location evidence="1">Host nucleus</location>
    </subcellularLocation>
    <subcellularLocation>
        <location evidence="1">Host mitochondrion</location>
    </subcellularLocation>
    <text evidence="1">Mainly cytoplasmic as only a fraction is detected in the nucleus. In cytoplasm, a minor fraction associates with mitochondria or proteasomes.</text>
</comment>
<comment type="PTM">
    <text evidence="1">A fraction may be phosphorylated in insect cells and HepG2 cells, a human hepatoblastoma cell line. Phosphorylated in vitro by host protein kinase C or mitogen-activated protein kinase. N-acetylated in insect cells.</text>
</comment>
<comment type="similarity">
    <text evidence="1">Belongs to the orthohepadnavirus protein X family.</text>
</comment>
<comment type="caution">
    <text>Transcriptional activities should be taken with a grain of salt. As of 2007, all studies demonstrating in vivo interaction between protein X and transcriptional components were performed with significant overexpression of both proteins and in the absence of viral infection.</text>
</comment>